<evidence type="ECO:0000255" key="1"/>
<evidence type="ECO:0000256" key="2">
    <source>
        <dbReference type="SAM" id="MobiDB-lite"/>
    </source>
</evidence>
<evidence type="ECO:0000269" key="3">
    <source>
    </source>
</evidence>
<evidence type="ECO:0000303" key="4">
    <source>
    </source>
</evidence>
<evidence type="ECO:0000305" key="5"/>
<evidence type="ECO:0000312" key="6">
    <source>
        <dbReference type="EMBL" id="AAB49425.1"/>
    </source>
</evidence>
<evidence type="ECO:0007829" key="7">
    <source>
        <dbReference type="PDB" id="9F1E"/>
    </source>
</evidence>
<evidence type="ECO:0007829" key="8">
    <source>
        <dbReference type="PDB" id="9F1F"/>
    </source>
</evidence>
<feature type="chain" id="PRO_0000221082" description="Remorin">
    <location>
        <begin position="1"/>
        <end position="198"/>
    </location>
</feature>
<feature type="region of interest" description="Disordered" evidence="2">
    <location>
        <begin position="1"/>
        <end position="24"/>
    </location>
</feature>
<feature type="coiled-coil region" evidence="1">
    <location>
        <begin position="97"/>
        <end position="184"/>
    </location>
</feature>
<feature type="compositionally biased region" description="Basic and acidic residues" evidence="2">
    <location>
        <begin position="1"/>
        <end position="11"/>
    </location>
</feature>
<feature type="helix" evidence="8">
    <location>
        <begin position="161"/>
        <end position="166"/>
    </location>
</feature>
<feature type="turn" evidence="8">
    <location>
        <begin position="167"/>
        <end position="169"/>
    </location>
</feature>
<feature type="helix" evidence="7">
    <location>
        <begin position="172"/>
        <end position="187"/>
    </location>
</feature>
<feature type="helix" evidence="7">
    <location>
        <begin position="190"/>
        <end position="193"/>
    </location>
</feature>
<feature type="turn" evidence="7">
    <location>
        <begin position="194"/>
        <end position="197"/>
    </location>
</feature>
<reference evidence="5" key="1">
    <citation type="journal article" date="1996" name="Plant Cell">
        <title>Cloning of a cDNA encoding a plasma membrane-associated, uronide binding phosphoprotein with physical properties similar to viral movement proteins.</title>
        <authorList>
            <person name="Reymond P."/>
            <person name="Kunz B."/>
            <person name="Paul-Pletzer K."/>
            <person name="Grimm R."/>
            <person name="Eckerskorn C."/>
            <person name="Farmer E.E."/>
        </authorList>
    </citation>
    <scope>NUCLEOTIDE SEQUENCE [MRNA]</scope>
    <scope>PROTEIN SEQUENCE OF 8-24; 34-47; 72-88; 95-99; 112-122; 132-139; 152-157 AND 170-173</scope>
    <scope>FUNCTION</scope>
    <scope>SUBCELLULAR LOCATION</scope>
    <scope>PHOSPHORYLATION</scope>
    <source>
        <strain>cv. Bintje</strain>
        <tissue>Leaf</tissue>
    </source>
</reference>
<name>REMO_SOLTU</name>
<keyword id="KW-0002">3D-structure</keyword>
<keyword id="KW-1003">Cell membrane</keyword>
<keyword id="KW-0175">Coiled coil</keyword>
<keyword id="KW-0903">Direct protein sequencing</keyword>
<keyword id="KW-0472">Membrane</keyword>
<keyword id="KW-0597">Phosphoprotein</keyword>
<keyword id="KW-1185">Reference proteome</keyword>
<keyword id="KW-0813">Transport</keyword>
<protein>
    <recommendedName>
        <fullName>Remorin</fullName>
    </recommendedName>
    <alternativeName>
        <fullName>pp34</fullName>
    </alternativeName>
</protein>
<sequence>MAELEAKKVEIVDPAPPAPGPVEAPKEVVADEKAIVAPALPPPAEEKEKPDDSKALVVVETKAPEPADEKKEGSIDRDAVLARVATEKRVSLIKAWEESEKSKAENKAQKKVSAIGAWENSKKANLEAELKKMEEQLEKKKAEYTEKMKNKIALLHKEAEEKRAMIEAKRGEDLLKAEELAAKYRATGTAPKKILGIF</sequence>
<accession>P93788</accession>
<organism evidence="6">
    <name type="scientific">Solanum tuberosum</name>
    <name type="common">Potato</name>
    <dbReference type="NCBI Taxonomy" id="4113"/>
    <lineage>
        <taxon>Eukaryota</taxon>
        <taxon>Viridiplantae</taxon>
        <taxon>Streptophyta</taxon>
        <taxon>Embryophyta</taxon>
        <taxon>Tracheophyta</taxon>
        <taxon>Spermatophyta</taxon>
        <taxon>Magnoliopsida</taxon>
        <taxon>eudicotyledons</taxon>
        <taxon>Gunneridae</taxon>
        <taxon>Pentapetalae</taxon>
        <taxon>asterids</taxon>
        <taxon>lamiids</taxon>
        <taxon>Solanales</taxon>
        <taxon>Solanaceae</taxon>
        <taxon>Solanoideae</taxon>
        <taxon>Solaneae</taxon>
        <taxon>Solanum</taxon>
    </lineage>
</organism>
<comment type="function">
    <text evidence="3 4">Binds to both simple and complex galacturonides. May be involved in cell-to-cell signaling and molecular transport.</text>
</comment>
<comment type="subcellular location">
    <subcellularLocation>
        <location evidence="3">Cell membrane</location>
        <topology evidence="3">Peripheral membrane protein</topology>
    </subcellularLocation>
</comment>
<comment type="PTM">
    <text evidence="3">The N-terminus is blocked.</text>
</comment>
<comment type="PTM">
    <text evidence="3">Phosphorylated.</text>
</comment>
<comment type="similarity">
    <text evidence="5">Belongs to the remorin family.</text>
</comment>
<proteinExistence type="evidence at protein level"/>
<dbReference type="EMBL" id="U72489">
    <property type="protein sequence ID" value="AAB49425.1"/>
    <property type="molecule type" value="mRNA"/>
</dbReference>
<dbReference type="PIR" id="T07780">
    <property type="entry name" value="T07780"/>
</dbReference>
<dbReference type="RefSeq" id="NP_001274989.1">
    <property type="nucleotide sequence ID" value="NM_001288060.1"/>
</dbReference>
<dbReference type="PDB" id="9F1E">
    <property type="method" value="NMR"/>
    <property type="chains" value="A=171-198"/>
</dbReference>
<dbReference type="PDB" id="9F1F">
    <property type="method" value="NMR"/>
    <property type="chains" value="A=160-198"/>
</dbReference>
<dbReference type="PDB" id="9F1G">
    <property type="method" value="NMR"/>
    <property type="chains" value="A=150-198"/>
</dbReference>
<dbReference type="PDBsum" id="9F1E"/>
<dbReference type="PDBsum" id="9F1F"/>
<dbReference type="PDBsum" id="9F1G"/>
<dbReference type="SMR" id="P93788"/>
<dbReference type="STRING" id="4113.P93788"/>
<dbReference type="PaxDb" id="4113-PGSC0003DMT400037192"/>
<dbReference type="EnsemblPlants" id="RHC03H1G1288.2.1">
    <property type="protein sequence ID" value="RHC03H1G1288.2.1"/>
    <property type="gene ID" value="RHC03H1G1288.2"/>
</dbReference>
<dbReference type="GeneID" id="102577743"/>
<dbReference type="Gramene" id="RHC03H1G1288.2.1">
    <property type="protein sequence ID" value="RHC03H1G1288.2.1"/>
    <property type="gene ID" value="RHC03H1G1288.2"/>
</dbReference>
<dbReference type="KEGG" id="sot:102577743"/>
<dbReference type="eggNOG" id="ENOG502RXYN">
    <property type="taxonomic scope" value="Eukaryota"/>
</dbReference>
<dbReference type="InParanoid" id="P93788"/>
<dbReference type="OrthoDB" id="684343at2759"/>
<dbReference type="Proteomes" id="UP000011115">
    <property type="component" value="Unassembled WGS sequence"/>
</dbReference>
<dbReference type="ExpressionAtlas" id="P93788">
    <property type="expression patterns" value="baseline and differential"/>
</dbReference>
<dbReference type="GO" id="GO:0005886">
    <property type="term" value="C:plasma membrane"/>
    <property type="evidence" value="ECO:0000314"/>
    <property type="project" value="UniProtKB"/>
</dbReference>
<dbReference type="GO" id="GO:0048032">
    <property type="term" value="F:galacturonate binding"/>
    <property type="evidence" value="ECO:0000314"/>
    <property type="project" value="UniProtKB"/>
</dbReference>
<dbReference type="GO" id="GO:0007267">
    <property type="term" value="P:cell-cell signaling"/>
    <property type="evidence" value="ECO:0000303"/>
    <property type="project" value="UniProtKB"/>
</dbReference>
<dbReference type="InterPro" id="IPR005516">
    <property type="entry name" value="Remorin_C"/>
</dbReference>
<dbReference type="InterPro" id="IPR005518">
    <property type="entry name" value="Remorin_N"/>
</dbReference>
<dbReference type="PANTHER" id="PTHR31775">
    <property type="entry name" value="OS02G0117200 PROTEIN"/>
    <property type="match status" value="1"/>
</dbReference>
<dbReference type="PANTHER" id="PTHR31775:SF5">
    <property type="entry name" value="REMORIN 1.4"/>
    <property type="match status" value="1"/>
</dbReference>
<dbReference type="Pfam" id="PF03763">
    <property type="entry name" value="Remorin_C"/>
    <property type="match status" value="1"/>
</dbReference>
<dbReference type="Pfam" id="PF03766">
    <property type="entry name" value="Remorin_N"/>
    <property type="match status" value="1"/>
</dbReference>